<keyword id="KW-0961">Cell wall biogenesis/degradation</keyword>
<keyword id="KW-0378">Hydrolase</keyword>
<keyword id="KW-0964">Secreted</keyword>
<keyword id="KW-0732">Signal</keyword>
<reference key="1">
    <citation type="journal article" date="2001" name="Lancet">
        <title>Whole genome sequencing of meticillin-resistant Staphylococcus aureus.</title>
        <authorList>
            <person name="Kuroda M."/>
            <person name="Ohta T."/>
            <person name="Uchiyama I."/>
            <person name="Baba T."/>
            <person name="Yuzawa H."/>
            <person name="Kobayashi I."/>
            <person name="Cui L."/>
            <person name="Oguchi A."/>
            <person name="Aoki K."/>
            <person name="Nagai Y."/>
            <person name="Lian J.-Q."/>
            <person name="Ito T."/>
            <person name="Kanamori M."/>
            <person name="Matsumaru H."/>
            <person name="Maruyama A."/>
            <person name="Murakami H."/>
            <person name="Hosoyama A."/>
            <person name="Mizutani-Ui Y."/>
            <person name="Takahashi N.K."/>
            <person name="Sawano T."/>
            <person name="Inoue R."/>
            <person name="Kaito C."/>
            <person name="Sekimizu K."/>
            <person name="Hirakawa H."/>
            <person name="Kuhara S."/>
            <person name="Goto S."/>
            <person name="Yabuzaki J."/>
            <person name="Kanehisa M."/>
            <person name="Yamashita A."/>
            <person name="Oshima K."/>
            <person name="Furuya K."/>
            <person name="Yoshino C."/>
            <person name="Shiba T."/>
            <person name="Hattori M."/>
            <person name="Ogasawara N."/>
            <person name="Hayashi H."/>
            <person name="Hiramatsu K."/>
        </authorList>
    </citation>
    <scope>NUCLEOTIDE SEQUENCE [LARGE SCALE GENOMIC DNA]</scope>
    <source>
        <strain>Mu50 / ATCC 700699</strain>
    </source>
</reference>
<comment type="function">
    <text evidence="1">Probably involved in cell-wall metabolism.</text>
</comment>
<comment type="subcellular location">
    <subcellularLocation>
        <location evidence="5">Secreted</location>
    </subcellularLocation>
</comment>
<comment type="similarity">
    <text evidence="5">Belongs to the N-acetylmuramoyl-L-alanine amidase 3 family.</text>
</comment>
<accession>Q7A2R2</accession>
<gene>
    <name type="primary">lytH</name>
    <name type="ordered locus">SAV1632</name>
</gene>
<evidence type="ECO:0000250" key="1"/>
<evidence type="ECO:0000255" key="2"/>
<evidence type="ECO:0000255" key="3">
    <source>
        <dbReference type="PROSITE-ProRule" id="PRU01117"/>
    </source>
</evidence>
<evidence type="ECO:0000256" key="4">
    <source>
        <dbReference type="SAM" id="MobiDB-lite"/>
    </source>
</evidence>
<evidence type="ECO:0000305" key="5"/>
<feature type="signal peptide" evidence="2">
    <location>
        <begin position="1"/>
        <end position="40"/>
    </location>
</feature>
<feature type="chain" id="PRO_0000226282" description="Probable cell wall amidase LytH">
    <location>
        <begin position="41"/>
        <end position="291"/>
    </location>
</feature>
<feature type="domain" description="SH3b" evidence="3">
    <location>
        <begin position="41"/>
        <end position="105"/>
    </location>
</feature>
<feature type="domain" description="MurNAc-LAA" evidence="2">
    <location>
        <begin position="122"/>
        <end position="286"/>
    </location>
</feature>
<feature type="region of interest" description="Disordered" evidence="4">
    <location>
        <begin position="118"/>
        <end position="140"/>
    </location>
</feature>
<sequence length="291" mass="32694">MKKIEAWLSKKGLKNKRTLIVVIAFVLFIIFLFLLLNSNSEDSGNITITENAELRTGPNAAYPVIYKVEKGDHFKKIGKVGKWIEVEDTSSNEKGWIAGWHTNLDIVADNTKEKNPLQGKTIVLDPGHGGSDQGASSNTKYKSLEKDYTLKTAKELQRTLEKEGATVKMTRTDDTYVSLENRDIKGDAYLSIHNDALESSNANGMTVYWYHDNQRALADTLDATIQKKGLLSNRGSRQENYQVLRQTKVPAVLLELGYISNPTDETMIKDQLHRQILEQAIVDGLKIYFSA</sequence>
<organism>
    <name type="scientific">Staphylococcus aureus (strain Mu50 / ATCC 700699)</name>
    <dbReference type="NCBI Taxonomy" id="158878"/>
    <lineage>
        <taxon>Bacteria</taxon>
        <taxon>Bacillati</taxon>
        <taxon>Bacillota</taxon>
        <taxon>Bacilli</taxon>
        <taxon>Bacillales</taxon>
        <taxon>Staphylococcaceae</taxon>
        <taxon>Staphylococcus</taxon>
    </lineage>
</organism>
<name>LYTH_STAAM</name>
<dbReference type="EC" id="3.5.1.-"/>
<dbReference type="EMBL" id="BA000017">
    <property type="protein sequence ID" value="BAB57794.1"/>
    <property type="molecule type" value="Genomic_DNA"/>
</dbReference>
<dbReference type="RefSeq" id="WP_000717800.1">
    <property type="nucleotide sequence ID" value="NC_002758.2"/>
</dbReference>
<dbReference type="SMR" id="Q7A2R2"/>
<dbReference type="KEGG" id="sav:SAV1632"/>
<dbReference type="HOGENOM" id="CLU_014322_1_1_9"/>
<dbReference type="PhylomeDB" id="Q7A2R2"/>
<dbReference type="Proteomes" id="UP000002481">
    <property type="component" value="Chromosome"/>
</dbReference>
<dbReference type="GO" id="GO:0005576">
    <property type="term" value="C:extracellular region"/>
    <property type="evidence" value="ECO:0007669"/>
    <property type="project" value="UniProtKB-SubCell"/>
</dbReference>
<dbReference type="GO" id="GO:0030288">
    <property type="term" value="C:outer membrane-bounded periplasmic space"/>
    <property type="evidence" value="ECO:0007669"/>
    <property type="project" value="TreeGrafter"/>
</dbReference>
<dbReference type="GO" id="GO:0008745">
    <property type="term" value="F:N-acetylmuramoyl-L-alanine amidase activity"/>
    <property type="evidence" value="ECO:0007669"/>
    <property type="project" value="InterPro"/>
</dbReference>
<dbReference type="GO" id="GO:0071555">
    <property type="term" value="P:cell wall organization"/>
    <property type="evidence" value="ECO:0007669"/>
    <property type="project" value="UniProtKB-KW"/>
</dbReference>
<dbReference type="GO" id="GO:0009253">
    <property type="term" value="P:peptidoglycan catabolic process"/>
    <property type="evidence" value="ECO:0007669"/>
    <property type="project" value="InterPro"/>
</dbReference>
<dbReference type="CDD" id="cd02696">
    <property type="entry name" value="MurNAc-LAA"/>
    <property type="match status" value="1"/>
</dbReference>
<dbReference type="Gene3D" id="2.30.30.40">
    <property type="entry name" value="SH3 Domains"/>
    <property type="match status" value="1"/>
</dbReference>
<dbReference type="Gene3D" id="3.40.630.40">
    <property type="entry name" value="Zn-dependent exopeptidases"/>
    <property type="match status" value="1"/>
</dbReference>
<dbReference type="InterPro" id="IPR017273">
    <property type="entry name" value="LytH"/>
</dbReference>
<dbReference type="InterPro" id="IPR002508">
    <property type="entry name" value="MurNAc-LAA_cat"/>
</dbReference>
<dbReference type="InterPro" id="IPR050695">
    <property type="entry name" value="N-acetylmuramoyl_amidase_3"/>
</dbReference>
<dbReference type="InterPro" id="IPR003646">
    <property type="entry name" value="SH3-like_bac-type"/>
</dbReference>
<dbReference type="PANTHER" id="PTHR30404:SF7">
    <property type="entry name" value="CELL WALL AMIDASE LYTH-RELATED"/>
    <property type="match status" value="1"/>
</dbReference>
<dbReference type="PANTHER" id="PTHR30404">
    <property type="entry name" value="N-ACETYLMURAMOYL-L-ALANINE AMIDASE"/>
    <property type="match status" value="1"/>
</dbReference>
<dbReference type="Pfam" id="PF01520">
    <property type="entry name" value="Amidase_3"/>
    <property type="match status" value="1"/>
</dbReference>
<dbReference type="Pfam" id="PF08239">
    <property type="entry name" value="SH3_3"/>
    <property type="match status" value="1"/>
</dbReference>
<dbReference type="PIRSF" id="PIRSF037730">
    <property type="entry name" value="CWA_LytH_prd"/>
    <property type="match status" value="1"/>
</dbReference>
<dbReference type="SMART" id="SM00646">
    <property type="entry name" value="Ami_3"/>
    <property type="match status" value="1"/>
</dbReference>
<dbReference type="SMART" id="SM00287">
    <property type="entry name" value="SH3b"/>
    <property type="match status" value="1"/>
</dbReference>
<dbReference type="SUPFAM" id="SSF53187">
    <property type="entry name" value="Zn-dependent exopeptidases"/>
    <property type="match status" value="1"/>
</dbReference>
<dbReference type="PROSITE" id="PS51781">
    <property type="entry name" value="SH3B"/>
    <property type="match status" value="1"/>
</dbReference>
<protein>
    <recommendedName>
        <fullName>Probable cell wall amidase LytH</fullName>
        <ecNumber>3.5.1.-</ecNumber>
    </recommendedName>
</protein>
<proteinExistence type="inferred from homology"/>